<gene>
    <name evidence="1" type="primary">bioF</name>
    <name type="ordered locus">Tcr_1979</name>
</gene>
<evidence type="ECO:0000255" key="1">
    <source>
        <dbReference type="HAMAP-Rule" id="MF_01693"/>
    </source>
</evidence>
<name>BIOF_HYDCU</name>
<organism>
    <name type="scientific">Hydrogenovibrio crunogenus (strain DSM 25203 / XCL-2)</name>
    <name type="common">Thiomicrospira crunogena</name>
    <dbReference type="NCBI Taxonomy" id="317025"/>
    <lineage>
        <taxon>Bacteria</taxon>
        <taxon>Pseudomonadati</taxon>
        <taxon>Pseudomonadota</taxon>
        <taxon>Gammaproteobacteria</taxon>
        <taxon>Thiotrichales</taxon>
        <taxon>Piscirickettsiaceae</taxon>
        <taxon>Hydrogenovibrio</taxon>
    </lineage>
</organism>
<proteinExistence type="inferred from homology"/>
<dbReference type="EC" id="2.3.1.47" evidence="1"/>
<dbReference type="EMBL" id="CP000109">
    <property type="protein sequence ID" value="ABB42569.1"/>
    <property type="molecule type" value="Genomic_DNA"/>
</dbReference>
<dbReference type="SMR" id="Q31E54"/>
<dbReference type="STRING" id="317025.Tcr_1979"/>
<dbReference type="KEGG" id="tcx:Tcr_1979"/>
<dbReference type="eggNOG" id="COG0156">
    <property type="taxonomic scope" value="Bacteria"/>
</dbReference>
<dbReference type="HOGENOM" id="CLU_015846_11_2_6"/>
<dbReference type="OrthoDB" id="9807157at2"/>
<dbReference type="UniPathway" id="UPA00078"/>
<dbReference type="GO" id="GO:0008710">
    <property type="term" value="F:8-amino-7-oxononanoate synthase activity"/>
    <property type="evidence" value="ECO:0007669"/>
    <property type="project" value="UniProtKB-UniRule"/>
</dbReference>
<dbReference type="GO" id="GO:0030170">
    <property type="term" value="F:pyridoxal phosphate binding"/>
    <property type="evidence" value="ECO:0007669"/>
    <property type="project" value="UniProtKB-UniRule"/>
</dbReference>
<dbReference type="GO" id="GO:0009102">
    <property type="term" value="P:biotin biosynthetic process"/>
    <property type="evidence" value="ECO:0007669"/>
    <property type="project" value="UniProtKB-UniRule"/>
</dbReference>
<dbReference type="CDD" id="cd06454">
    <property type="entry name" value="KBL_like"/>
    <property type="match status" value="1"/>
</dbReference>
<dbReference type="Gene3D" id="3.90.1150.10">
    <property type="entry name" value="Aspartate Aminotransferase, domain 1"/>
    <property type="match status" value="1"/>
</dbReference>
<dbReference type="Gene3D" id="3.40.640.10">
    <property type="entry name" value="Type I PLP-dependent aspartate aminotransferase-like (Major domain)"/>
    <property type="match status" value="1"/>
</dbReference>
<dbReference type="HAMAP" id="MF_01693">
    <property type="entry name" value="BioF_aminotrans_2"/>
    <property type="match status" value="1"/>
</dbReference>
<dbReference type="InterPro" id="IPR001917">
    <property type="entry name" value="Aminotrans_II_pyridoxalP_BS"/>
</dbReference>
<dbReference type="InterPro" id="IPR004839">
    <property type="entry name" value="Aminotransferase_I/II_large"/>
</dbReference>
<dbReference type="InterPro" id="IPR050087">
    <property type="entry name" value="AON_synthase_class-II"/>
</dbReference>
<dbReference type="InterPro" id="IPR004723">
    <property type="entry name" value="AONS_Archaea/Proteobacteria"/>
</dbReference>
<dbReference type="InterPro" id="IPR022834">
    <property type="entry name" value="AONS_Proteobacteria"/>
</dbReference>
<dbReference type="InterPro" id="IPR015424">
    <property type="entry name" value="PyrdxlP-dep_Trfase"/>
</dbReference>
<dbReference type="InterPro" id="IPR015421">
    <property type="entry name" value="PyrdxlP-dep_Trfase_major"/>
</dbReference>
<dbReference type="InterPro" id="IPR015422">
    <property type="entry name" value="PyrdxlP-dep_Trfase_small"/>
</dbReference>
<dbReference type="NCBIfam" id="TIGR00858">
    <property type="entry name" value="bioF"/>
    <property type="match status" value="1"/>
</dbReference>
<dbReference type="PANTHER" id="PTHR13693:SF100">
    <property type="entry name" value="8-AMINO-7-OXONONANOATE SYNTHASE"/>
    <property type="match status" value="1"/>
</dbReference>
<dbReference type="PANTHER" id="PTHR13693">
    <property type="entry name" value="CLASS II AMINOTRANSFERASE/8-AMINO-7-OXONONANOATE SYNTHASE"/>
    <property type="match status" value="1"/>
</dbReference>
<dbReference type="Pfam" id="PF00155">
    <property type="entry name" value="Aminotran_1_2"/>
    <property type="match status" value="1"/>
</dbReference>
<dbReference type="SUPFAM" id="SSF53383">
    <property type="entry name" value="PLP-dependent transferases"/>
    <property type="match status" value="1"/>
</dbReference>
<dbReference type="PROSITE" id="PS00599">
    <property type="entry name" value="AA_TRANSFER_CLASS_2"/>
    <property type="match status" value="1"/>
</dbReference>
<keyword id="KW-0093">Biotin biosynthesis</keyword>
<keyword id="KW-0663">Pyridoxal phosphate</keyword>
<keyword id="KW-0808">Transferase</keyword>
<protein>
    <recommendedName>
        <fullName evidence="1">8-amino-7-oxononanoate synthase</fullName>
        <shortName evidence="1">AONS</shortName>
        <ecNumber evidence="1">2.3.1.47</ecNumber>
    </recommendedName>
    <alternativeName>
        <fullName evidence="1">7-keto-8-amino-pelargonic acid synthase</fullName>
        <shortName evidence="1">7-KAP synthase</shortName>
        <shortName evidence="1">KAPA synthase</shortName>
    </alternativeName>
    <alternativeName>
        <fullName evidence="1">8-amino-7-ketopelargonate synthase</fullName>
    </alternativeName>
</protein>
<sequence>MAIESIKNRFAPVLAKREAEALYRRRPLVTSPQTAEMQINGLQVINFSSNDYLGLANHPALKHSCETIQDLSYGSGAAHLVTGHHLEHHLLEDELADWLGCERALLFSTGYMANLAVQQTLMQKGDWILADKLNHASLIDGARYSEADLKRYPHLDMQALEKRLQKAQQENRQCLIVTDGVFSMDGDCAPLQTIQALAKTYQAWLFLDDAHGFGTLGEQGKGTLAHFNLTPDENTIIMGTLGKAFGASGAFVAGSEVLVETLIQMARPYIYTTAMPPINARVARTALKQVQQADAEREQLKRNIQHFQTGANQLGLTLWPSDSAIQPIMLGRSAQAIQWSEALKQKGLWVTAIRPPTVPKNTARLRVTLSAAHTAEHIEKLLQALAQCQDDFPSSNT</sequence>
<reference key="1">
    <citation type="journal article" date="2006" name="PLoS Biol.">
        <title>The genome of deep-sea vent chemolithoautotroph Thiomicrospira crunogena XCL-2.</title>
        <authorList>
            <person name="Scott K.M."/>
            <person name="Sievert S.M."/>
            <person name="Abril F.N."/>
            <person name="Ball L.A."/>
            <person name="Barrett C.J."/>
            <person name="Blake R.A."/>
            <person name="Boller A.J."/>
            <person name="Chain P.S.G."/>
            <person name="Clark J.A."/>
            <person name="Davis C.R."/>
            <person name="Detter C."/>
            <person name="Do K.F."/>
            <person name="Dobrinski K.P."/>
            <person name="Faza B.I."/>
            <person name="Fitzpatrick K.A."/>
            <person name="Freyermuth S.K."/>
            <person name="Harmer T.L."/>
            <person name="Hauser L.J."/>
            <person name="Huegler M."/>
            <person name="Kerfeld C.A."/>
            <person name="Klotz M.G."/>
            <person name="Kong W.W."/>
            <person name="Land M."/>
            <person name="Lapidus A."/>
            <person name="Larimer F.W."/>
            <person name="Longo D.L."/>
            <person name="Lucas S."/>
            <person name="Malfatti S.A."/>
            <person name="Massey S.E."/>
            <person name="Martin D.D."/>
            <person name="McCuddin Z."/>
            <person name="Meyer F."/>
            <person name="Moore J.L."/>
            <person name="Ocampo L.H. Jr."/>
            <person name="Paul J.H."/>
            <person name="Paulsen I.T."/>
            <person name="Reep D.K."/>
            <person name="Ren Q."/>
            <person name="Ross R.L."/>
            <person name="Sato P.Y."/>
            <person name="Thomas P."/>
            <person name="Tinkham L.E."/>
            <person name="Zeruth G.T."/>
        </authorList>
    </citation>
    <scope>NUCLEOTIDE SEQUENCE [LARGE SCALE GENOMIC DNA]</scope>
    <source>
        <strain>DSM 25203 / XCL-2</strain>
    </source>
</reference>
<comment type="function">
    <text evidence="1">Catalyzes the decarboxylative condensation of pimeloyl-[acyl-carrier protein] and L-alanine to produce 8-amino-7-oxononanoate (AON), [acyl-carrier protein], and carbon dioxide.</text>
</comment>
<comment type="catalytic activity">
    <reaction evidence="1">
        <text>6-carboxyhexanoyl-[ACP] + L-alanine + H(+) = (8S)-8-amino-7-oxononanoate + holo-[ACP] + CO2</text>
        <dbReference type="Rhea" id="RHEA:42288"/>
        <dbReference type="Rhea" id="RHEA-COMP:9685"/>
        <dbReference type="Rhea" id="RHEA-COMP:9955"/>
        <dbReference type="ChEBI" id="CHEBI:15378"/>
        <dbReference type="ChEBI" id="CHEBI:16526"/>
        <dbReference type="ChEBI" id="CHEBI:57972"/>
        <dbReference type="ChEBI" id="CHEBI:64479"/>
        <dbReference type="ChEBI" id="CHEBI:78846"/>
        <dbReference type="ChEBI" id="CHEBI:149468"/>
        <dbReference type="EC" id="2.3.1.47"/>
    </reaction>
</comment>
<comment type="cofactor">
    <cofactor evidence="1">
        <name>pyridoxal 5'-phosphate</name>
        <dbReference type="ChEBI" id="CHEBI:597326"/>
    </cofactor>
</comment>
<comment type="pathway">
    <text evidence="1">Cofactor biosynthesis; biotin biosynthesis.</text>
</comment>
<comment type="subunit">
    <text evidence="1">Homodimer.</text>
</comment>
<comment type="similarity">
    <text evidence="1">Belongs to the class-II pyridoxal-phosphate-dependent aminotransferase family. BioF subfamily.</text>
</comment>
<accession>Q31E54</accession>
<feature type="chain" id="PRO_0000381127" description="8-amino-7-oxononanoate synthase">
    <location>
        <begin position="1"/>
        <end position="397"/>
    </location>
</feature>
<feature type="binding site" evidence="1">
    <location>
        <position position="24"/>
    </location>
    <ligand>
        <name>substrate</name>
    </ligand>
</feature>
<feature type="binding site" evidence="1">
    <location>
        <begin position="110"/>
        <end position="111"/>
    </location>
    <ligand>
        <name>pyridoxal 5'-phosphate</name>
        <dbReference type="ChEBI" id="CHEBI:597326"/>
    </ligand>
</feature>
<feature type="binding site" evidence="1">
    <location>
        <position position="135"/>
    </location>
    <ligand>
        <name>substrate</name>
    </ligand>
</feature>
<feature type="binding site" evidence="1">
    <location>
        <position position="183"/>
    </location>
    <ligand>
        <name>pyridoxal 5'-phosphate</name>
        <dbReference type="ChEBI" id="CHEBI:597326"/>
    </ligand>
</feature>
<feature type="binding site" evidence="1">
    <location>
        <position position="211"/>
    </location>
    <ligand>
        <name>pyridoxal 5'-phosphate</name>
        <dbReference type="ChEBI" id="CHEBI:597326"/>
    </ligand>
</feature>
<feature type="binding site" evidence="1">
    <location>
        <position position="240"/>
    </location>
    <ligand>
        <name>pyridoxal 5'-phosphate</name>
        <dbReference type="ChEBI" id="CHEBI:597326"/>
    </ligand>
</feature>
<feature type="binding site" evidence="1">
    <location>
        <position position="357"/>
    </location>
    <ligand>
        <name>substrate</name>
    </ligand>
</feature>
<feature type="modified residue" description="N6-(pyridoxal phosphate)lysine" evidence="1">
    <location>
        <position position="243"/>
    </location>
</feature>